<accession>A0A144LVM3</accession>
<proteinExistence type="evidence at protein level"/>
<keyword id="KW-0044">Antibiotic</keyword>
<keyword id="KW-0929">Antimicrobial</keyword>
<keyword id="KW-0102">Bromination</keyword>
<keyword id="KW-0903">Direct protein sequencing</keyword>
<keyword id="KW-1015">Disulfide bond</keyword>
<keyword id="KW-0295">Fungicide</keyword>
<keyword id="KW-0732">Signal</keyword>
<protein>
    <recommendedName>
        <fullName evidence="6">Strongylocin 2</fullName>
    </recommendedName>
    <alternativeName>
        <fullName evidence="3">EeStrongylocin 2</fullName>
    </alternativeName>
</protein>
<reference evidence="6" key="1">
    <citation type="journal article" date="2016" name="PLoS ONE">
        <title>Novel Antimicrobial Peptides EeCentrocins 1, 2 and EeStrongylocin 2 from the Edible Sea Urchin Echinus esculentus Have 6-Br-Trp Post-Translational Modifications.</title>
        <authorList>
            <person name="Solstad R.G."/>
            <person name="Li C."/>
            <person name="Isaksson J."/>
            <person name="Johansen J."/>
            <person name="Svenson J."/>
            <person name="Stensvag K."/>
            <person name="Haug T."/>
        </authorList>
    </citation>
    <scope>NUCLEOTIDE SEQUENCE [MRNA]</scope>
    <scope>PROTEIN SEQUENCE OF 39-48; 50-55 AND 81-89</scope>
    <scope>FUNCTION</scope>
    <scope>PRESENCE OF DISULFIDE BONDS</scope>
    <scope>MASS SPECTROMETRY</scope>
    <scope>BROMINATION AT TRP-39</scope>
    <source>
        <tissue evidence="3">Coelomocyte</tissue>
    </source>
</reference>
<evidence type="ECO:0000255" key="1"/>
<evidence type="ECO:0000269" key="2">
    <source>
    </source>
</evidence>
<evidence type="ECO:0000303" key="3">
    <source>
    </source>
</evidence>
<evidence type="ECO:0000305" key="4"/>
<evidence type="ECO:0000305" key="5">
    <source>
    </source>
</evidence>
<evidence type="ECO:0000312" key="6">
    <source>
        <dbReference type="EMBL" id="AMT92376.1"/>
    </source>
</evidence>
<feature type="signal peptide" evidence="1">
    <location>
        <begin position="1"/>
        <end position="22"/>
    </location>
</feature>
<feature type="propeptide" id="PRO_0000438846" evidence="4">
    <location>
        <begin position="23"/>
        <end position="38"/>
    </location>
</feature>
<feature type="peptide" id="PRO_0000438847" description="Strongylocin 2" evidence="5">
    <location>
        <begin position="39"/>
        <end position="89"/>
    </location>
</feature>
<feature type="modified residue" description="6'-bromotryptophan" evidence="2">
    <location>
        <position position="39"/>
    </location>
</feature>
<dbReference type="EMBL" id="KR494264">
    <property type="protein sequence ID" value="AMT92376.1"/>
    <property type="molecule type" value="mRNA"/>
</dbReference>
<dbReference type="GO" id="GO:0042742">
    <property type="term" value="P:defense response to bacterium"/>
    <property type="evidence" value="ECO:0007669"/>
    <property type="project" value="UniProtKB-KW"/>
</dbReference>
<dbReference type="GO" id="GO:0050832">
    <property type="term" value="P:defense response to fungus"/>
    <property type="evidence" value="ECO:0007669"/>
    <property type="project" value="UniProtKB-KW"/>
</dbReference>
<dbReference type="GO" id="GO:0031640">
    <property type="term" value="P:killing of cells of another organism"/>
    <property type="evidence" value="ECO:0007669"/>
    <property type="project" value="UniProtKB-KW"/>
</dbReference>
<name>STCN2_ECHES</name>
<organism evidence="6">
    <name type="scientific">Echinus esculentus</name>
    <name type="common">Sea urchin</name>
    <dbReference type="NCBI Taxonomy" id="7648"/>
    <lineage>
        <taxon>Eukaryota</taxon>
        <taxon>Metazoa</taxon>
        <taxon>Echinodermata</taxon>
        <taxon>Eleutherozoa</taxon>
        <taxon>Echinozoa</taxon>
        <taxon>Echinoidea</taxon>
        <taxon>Euechinoidea</taxon>
        <taxon>Echinacea</taxon>
        <taxon>Camarodonta</taxon>
        <taxon>Echinidea</taxon>
        <taxon>Echinidae</taxon>
        <taxon>Echinus</taxon>
    </lineage>
</organism>
<sequence length="89" mass="10298">MNIRTASFTFIVVMMILSQTMADRFFNEPEEDDHLVESWNPFKKIAHRHCYPKNECITTNGKKTCKDYSCCQIVLFGKKTRSACTVVAQ</sequence>
<comment type="function">
    <text evidence="2">Has antimicrobial activity against Gram-negative bacteria and Gram-positive bacteria with minimum inhibitory concentration (MIC) between 0.78 uM and 3.13 uM.</text>
</comment>
<comment type="PTM">
    <text evidence="2">Contains 3 disulfide bonds.</text>
</comment>
<comment type="mass spectrometry" mass="5917.77" method="Electrospray" evidence="2"/>